<name>RL9_NOVAD</name>
<accession>Q2G8G5</accession>
<keyword id="KW-1185">Reference proteome</keyword>
<keyword id="KW-0687">Ribonucleoprotein</keyword>
<keyword id="KW-0689">Ribosomal protein</keyword>
<keyword id="KW-0694">RNA-binding</keyword>
<keyword id="KW-0699">rRNA-binding</keyword>
<comment type="function">
    <text evidence="1">Binds to the 23S rRNA.</text>
</comment>
<comment type="similarity">
    <text evidence="1">Belongs to the bacterial ribosomal protein bL9 family.</text>
</comment>
<protein>
    <recommendedName>
        <fullName evidence="1">Large ribosomal subunit protein bL9</fullName>
    </recommendedName>
    <alternativeName>
        <fullName evidence="3">50S ribosomal protein L9</fullName>
    </alternativeName>
</protein>
<proteinExistence type="inferred from homology"/>
<feature type="chain" id="PRO_0000236555" description="Large ribosomal subunit protein bL9">
    <location>
        <begin position="1"/>
        <end position="199"/>
    </location>
</feature>
<feature type="region of interest" description="Disordered" evidence="2">
    <location>
        <begin position="169"/>
        <end position="199"/>
    </location>
</feature>
<gene>
    <name evidence="1" type="primary">rplI</name>
    <name type="ordered locus">Saro_1414</name>
</gene>
<organism>
    <name type="scientific">Novosphingobium aromaticivorans (strain ATCC 700278 / DSM 12444 / CCUG 56034 / CIP 105152 / NBRC 16084 / F199)</name>
    <dbReference type="NCBI Taxonomy" id="279238"/>
    <lineage>
        <taxon>Bacteria</taxon>
        <taxon>Pseudomonadati</taxon>
        <taxon>Pseudomonadota</taxon>
        <taxon>Alphaproteobacteria</taxon>
        <taxon>Sphingomonadales</taxon>
        <taxon>Sphingomonadaceae</taxon>
        <taxon>Novosphingobium</taxon>
    </lineage>
</organism>
<reference key="1">
    <citation type="submission" date="2006-01" db="EMBL/GenBank/DDBJ databases">
        <title>Complete sequence of Novosphingobium aromaticivorans DSM 12444.</title>
        <authorList>
            <consortium name="US DOE Joint Genome Institute"/>
            <person name="Copeland A."/>
            <person name="Lucas S."/>
            <person name="Lapidus A."/>
            <person name="Barry K."/>
            <person name="Detter J.C."/>
            <person name="Glavina T."/>
            <person name="Hammon N."/>
            <person name="Israni S."/>
            <person name="Pitluck S."/>
            <person name="Chain P."/>
            <person name="Malfatti S."/>
            <person name="Shin M."/>
            <person name="Vergez L."/>
            <person name="Schmutz J."/>
            <person name="Larimer F."/>
            <person name="Land M."/>
            <person name="Kyrpides N."/>
            <person name="Ivanova N."/>
            <person name="Fredrickson J."/>
            <person name="Balkwill D."/>
            <person name="Romine M.F."/>
            <person name="Richardson P."/>
        </authorList>
    </citation>
    <scope>NUCLEOTIDE SEQUENCE [LARGE SCALE GENOMIC DNA]</scope>
    <source>
        <strain>ATCC 700278 / DSM 12444 / CCUG 56034 / CIP 105152 / NBRC 16084 / F199</strain>
    </source>
</reference>
<evidence type="ECO:0000255" key="1">
    <source>
        <dbReference type="HAMAP-Rule" id="MF_00503"/>
    </source>
</evidence>
<evidence type="ECO:0000256" key="2">
    <source>
        <dbReference type="SAM" id="MobiDB-lite"/>
    </source>
</evidence>
<evidence type="ECO:0000305" key="3"/>
<sequence length="199" mass="21623">MQIILLERIEKLGAIGDEVTVKDGYARNFLLPNKKALRANEANRKVFEANRARIEAENAARRDEAQNESGNVEGKEVVLIRASSNAGQLYGSVSVRDISDALAEQGAKVTKSMIVLERPIKTIGVYDVRVSLHPEVSVTVKVNVARSPDEAELQSKGVNVIDAMFDNETGGFTEEYDPNAEPGEIPTELLEGGEEAAEA</sequence>
<dbReference type="EMBL" id="CP000248">
    <property type="protein sequence ID" value="ABD25858.1"/>
    <property type="molecule type" value="Genomic_DNA"/>
</dbReference>
<dbReference type="RefSeq" id="WP_011445072.1">
    <property type="nucleotide sequence ID" value="NC_007794.1"/>
</dbReference>
<dbReference type="SMR" id="Q2G8G5"/>
<dbReference type="STRING" id="279238.Saro_1414"/>
<dbReference type="KEGG" id="nar:Saro_1414"/>
<dbReference type="eggNOG" id="COG0359">
    <property type="taxonomic scope" value="Bacteria"/>
</dbReference>
<dbReference type="HOGENOM" id="CLU_078938_1_0_5"/>
<dbReference type="Proteomes" id="UP000009134">
    <property type="component" value="Chromosome"/>
</dbReference>
<dbReference type="GO" id="GO:1990904">
    <property type="term" value="C:ribonucleoprotein complex"/>
    <property type="evidence" value="ECO:0007669"/>
    <property type="project" value="UniProtKB-KW"/>
</dbReference>
<dbReference type="GO" id="GO:0005840">
    <property type="term" value="C:ribosome"/>
    <property type="evidence" value="ECO:0007669"/>
    <property type="project" value="UniProtKB-KW"/>
</dbReference>
<dbReference type="GO" id="GO:0019843">
    <property type="term" value="F:rRNA binding"/>
    <property type="evidence" value="ECO:0007669"/>
    <property type="project" value="UniProtKB-UniRule"/>
</dbReference>
<dbReference type="GO" id="GO:0003735">
    <property type="term" value="F:structural constituent of ribosome"/>
    <property type="evidence" value="ECO:0007669"/>
    <property type="project" value="InterPro"/>
</dbReference>
<dbReference type="GO" id="GO:0006412">
    <property type="term" value="P:translation"/>
    <property type="evidence" value="ECO:0007669"/>
    <property type="project" value="UniProtKB-UniRule"/>
</dbReference>
<dbReference type="Gene3D" id="3.10.430.100">
    <property type="entry name" value="Ribosomal protein L9, C-terminal domain"/>
    <property type="match status" value="1"/>
</dbReference>
<dbReference type="Gene3D" id="3.40.5.10">
    <property type="entry name" value="Ribosomal protein L9, N-terminal domain"/>
    <property type="match status" value="1"/>
</dbReference>
<dbReference type="HAMAP" id="MF_00503">
    <property type="entry name" value="Ribosomal_bL9"/>
    <property type="match status" value="1"/>
</dbReference>
<dbReference type="InterPro" id="IPR000244">
    <property type="entry name" value="Ribosomal_bL9"/>
</dbReference>
<dbReference type="InterPro" id="IPR009027">
    <property type="entry name" value="Ribosomal_bL9/RNase_H1_N"/>
</dbReference>
<dbReference type="InterPro" id="IPR020594">
    <property type="entry name" value="Ribosomal_bL9_bac/chp"/>
</dbReference>
<dbReference type="InterPro" id="IPR020069">
    <property type="entry name" value="Ribosomal_bL9_C"/>
</dbReference>
<dbReference type="InterPro" id="IPR036791">
    <property type="entry name" value="Ribosomal_bL9_C_sf"/>
</dbReference>
<dbReference type="InterPro" id="IPR020070">
    <property type="entry name" value="Ribosomal_bL9_N"/>
</dbReference>
<dbReference type="InterPro" id="IPR036935">
    <property type="entry name" value="Ribosomal_bL9_N_sf"/>
</dbReference>
<dbReference type="NCBIfam" id="TIGR00158">
    <property type="entry name" value="L9"/>
    <property type="match status" value="1"/>
</dbReference>
<dbReference type="PANTHER" id="PTHR21368">
    <property type="entry name" value="50S RIBOSOMAL PROTEIN L9"/>
    <property type="match status" value="1"/>
</dbReference>
<dbReference type="Pfam" id="PF03948">
    <property type="entry name" value="Ribosomal_L9_C"/>
    <property type="match status" value="1"/>
</dbReference>
<dbReference type="Pfam" id="PF01281">
    <property type="entry name" value="Ribosomal_L9_N"/>
    <property type="match status" value="1"/>
</dbReference>
<dbReference type="SUPFAM" id="SSF55658">
    <property type="entry name" value="L9 N-domain-like"/>
    <property type="match status" value="1"/>
</dbReference>
<dbReference type="SUPFAM" id="SSF55653">
    <property type="entry name" value="Ribosomal protein L9 C-domain"/>
    <property type="match status" value="1"/>
</dbReference>
<dbReference type="PROSITE" id="PS00651">
    <property type="entry name" value="RIBOSOMAL_L9"/>
    <property type="match status" value="1"/>
</dbReference>